<reference key="1">
    <citation type="journal article" date="2006" name="Mol. Microbiol.">
        <title>Role of pathogenicity island-associated integrases in the genome plasticity of uropathogenic Escherichia coli strain 536.</title>
        <authorList>
            <person name="Hochhut B."/>
            <person name="Wilde C."/>
            <person name="Balling G."/>
            <person name="Middendorf B."/>
            <person name="Dobrindt U."/>
            <person name="Brzuszkiewicz E."/>
            <person name="Gottschalk G."/>
            <person name="Carniel E."/>
            <person name="Hacker J."/>
        </authorList>
    </citation>
    <scope>NUCLEOTIDE SEQUENCE [LARGE SCALE GENOMIC DNA]</scope>
    <source>
        <strain>536 / UPEC</strain>
    </source>
</reference>
<sequence length="438" mass="46930">MADYQGKNVVIIGLGLTGLSCVDFFLARGVTPRVMDTRMTPPGLDKLPEAVERHTGGLNDEWLMAADLIVASPGIALAHPSLSAAADAGIEIVGDIELFCREAQAPIVAITGSNGKSTVTTLVGEMAKAAGVNVGVGGNIGLPALMLLDDECELYVLELSSFQLETTSSLQAVAATILNVTEDHMDRYPFGLQQYRAAKLRIYENAKVCVVNADDALTMPIRGADERCVSFGVNMGDYHLNHQQGETWLRVKGEKVLNVKEMKLSGQHNYTNALAALALADAAGLPRASSLKALTTFTGLPHRFEVVLEHNGVRWVNDSKATNVGSTEAALNGLHVDGTLHLLLGGDGKSADFSPLARYLNGDNVRLYCFGRDGAQLAALRPEVAEQTETMEQAMRLLAPRVQPGDMVLLSPACASLDQFKNFEQRGNEFARLAKELG</sequence>
<accession>Q0TLQ1</accession>
<gene>
    <name evidence="1" type="primary">murD</name>
    <name type="ordered locus">ECP_0090</name>
</gene>
<name>MURD_ECOL5</name>
<organism>
    <name type="scientific">Escherichia coli O6:K15:H31 (strain 536 / UPEC)</name>
    <dbReference type="NCBI Taxonomy" id="362663"/>
    <lineage>
        <taxon>Bacteria</taxon>
        <taxon>Pseudomonadati</taxon>
        <taxon>Pseudomonadota</taxon>
        <taxon>Gammaproteobacteria</taxon>
        <taxon>Enterobacterales</taxon>
        <taxon>Enterobacteriaceae</taxon>
        <taxon>Escherichia</taxon>
    </lineage>
</organism>
<protein>
    <recommendedName>
        <fullName evidence="1">UDP-N-acetylmuramoylalanine--D-glutamate ligase</fullName>
        <ecNumber evidence="1">6.3.2.9</ecNumber>
    </recommendedName>
    <alternativeName>
        <fullName evidence="1">D-glutamic acid-adding enzyme</fullName>
    </alternativeName>
    <alternativeName>
        <fullName evidence="1">UDP-N-acetylmuramoyl-L-alanyl-D-glutamate synthetase</fullName>
    </alternativeName>
</protein>
<feature type="chain" id="PRO_0000257189" description="UDP-N-acetylmuramoylalanine--D-glutamate ligase">
    <location>
        <begin position="1"/>
        <end position="438"/>
    </location>
</feature>
<feature type="binding site" evidence="1">
    <location>
        <begin position="112"/>
        <end position="118"/>
    </location>
    <ligand>
        <name>ATP</name>
        <dbReference type="ChEBI" id="CHEBI:30616"/>
    </ligand>
</feature>
<proteinExistence type="inferred from homology"/>
<dbReference type="EC" id="6.3.2.9" evidence="1"/>
<dbReference type="EMBL" id="CP000247">
    <property type="protein sequence ID" value="ABG68130.1"/>
    <property type="molecule type" value="Genomic_DNA"/>
</dbReference>
<dbReference type="RefSeq" id="WP_000796460.1">
    <property type="nucleotide sequence ID" value="NC_008253.1"/>
</dbReference>
<dbReference type="SMR" id="Q0TLQ1"/>
<dbReference type="KEGG" id="ecp:ECP_0090"/>
<dbReference type="HOGENOM" id="CLU_032540_1_0_6"/>
<dbReference type="UniPathway" id="UPA00219"/>
<dbReference type="Proteomes" id="UP000009182">
    <property type="component" value="Chromosome"/>
</dbReference>
<dbReference type="GO" id="GO:0005737">
    <property type="term" value="C:cytoplasm"/>
    <property type="evidence" value="ECO:0007669"/>
    <property type="project" value="UniProtKB-SubCell"/>
</dbReference>
<dbReference type="GO" id="GO:0005524">
    <property type="term" value="F:ATP binding"/>
    <property type="evidence" value="ECO:0007669"/>
    <property type="project" value="UniProtKB-UniRule"/>
</dbReference>
<dbReference type="GO" id="GO:0008764">
    <property type="term" value="F:UDP-N-acetylmuramoylalanine-D-glutamate ligase activity"/>
    <property type="evidence" value="ECO:0007669"/>
    <property type="project" value="UniProtKB-UniRule"/>
</dbReference>
<dbReference type="GO" id="GO:0051301">
    <property type="term" value="P:cell division"/>
    <property type="evidence" value="ECO:0007669"/>
    <property type="project" value="UniProtKB-KW"/>
</dbReference>
<dbReference type="GO" id="GO:0071555">
    <property type="term" value="P:cell wall organization"/>
    <property type="evidence" value="ECO:0007669"/>
    <property type="project" value="UniProtKB-KW"/>
</dbReference>
<dbReference type="GO" id="GO:0009252">
    <property type="term" value="P:peptidoglycan biosynthetic process"/>
    <property type="evidence" value="ECO:0007669"/>
    <property type="project" value="UniProtKB-UniRule"/>
</dbReference>
<dbReference type="GO" id="GO:0008360">
    <property type="term" value="P:regulation of cell shape"/>
    <property type="evidence" value="ECO:0007669"/>
    <property type="project" value="UniProtKB-KW"/>
</dbReference>
<dbReference type="FunFam" id="3.40.1190.10:FF:000002">
    <property type="entry name" value="UDP-N-acetylmuramoylalanine--D-glutamate ligase"/>
    <property type="match status" value="1"/>
</dbReference>
<dbReference type="FunFam" id="3.40.50.720:FF:000126">
    <property type="entry name" value="UDP-N-acetylmuramoylalanine--D-glutamate ligase"/>
    <property type="match status" value="1"/>
</dbReference>
<dbReference type="FunFam" id="3.90.190.20:FF:000003">
    <property type="entry name" value="UDP-N-acetylmuramoylalanine--D-glutamate ligase"/>
    <property type="match status" value="1"/>
</dbReference>
<dbReference type="Gene3D" id="3.90.190.20">
    <property type="entry name" value="Mur ligase, C-terminal domain"/>
    <property type="match status" value="1"/>
</dbReference>
<dbReference type="Gene3D" id="3.40.1190.10">
    <property type="entry name" value="Mur-like, catalytic domain"/>
    <property type="match status" value="1"/>
</dbReference>
<dbReference type="Gene3D" id="3.40.50.720">
    <property type="entry name" value="NAD(P)-binding Rossmann-like Domain"/>
    <property type="match status" value="1"/>
</dbReference>
<dbReference type="HAMAP" id="MF_00639">
    <property type="entry name" value="MurD"/>
    <property type="match status" value="1"/>
</dbReference>
<dbReference type="InterPro" id="IPR036565">
    <property type="entry name" value="Mur-like_cat_sf"/>
</dbReference>
<dbReference type="InterPro" id="IPR004101">
    <property type="entry name" value="Mur_ligase_C"/>
</dbReference>
<dbReference type="InterPro" id="IPR036615">
    <property type="entry name" value="Mur_ligase_C_dom_sf"/>
</dbReference>
<dbReference type="InterPro" id="IPR013221">
    <property type="entry name" value="Mur_ligase_cen"/>
</dbReference>
<dbReference type="InterPro" id="IPR005762">
    <property type="entry name" value="MurD"/>
</dbReference>
<dbReference type="NCBIfam" id="TIGR01087">
    <property type="entry name" value="murD"/>
    <property type="match status" value="1"/>
</dbReference>
<dbReference type="PANTHER" id="PTHR43692">
    <property type="entry name" value="UDP-N-ACETYLMURAMOYLALANINE--D-GLUTAMATE LIGASE"/>
    <property type="match status" value="1"/>
</dbReference>
<dbReference type="PANTHER" id="PTHR43692:SF1">
    <property type="entry name" value="UDP-N-ACETYLMURAMOYLALANINE--D-GLUTAMATE LIGASE"/>
    <property type="match status" value="1"/>
</dbReference>
<dbReference type="Pfam" id="PF02875">
    <property type="entry name" value="Mur_ligase_C"/>
    <property type="match status" value="1"/>
</dbReference>
<dbReference type="Pfam" id="PF08245">
    <property type="entry name" value="Mur_ligase_M"/>
    <property type="match status" value="1"/>
</dbReference>
<dbReference type="Pfam" id="PF21799">
    <property type="entry name" value="MurD-like_N"/>
    <property type="match status" value="1"/>
</dbReference>
<dbReference type="SUPFAM" id="SSF51984">
    <property type="entry name" value="MurCD N-terminal domain"/>
    <property type="match status" value="1"/>
</dbReference>
<dbReference type="SUPFAM" id="SSF53623">
    <property type="entry name" value="MurD-like peptide ligases, catalytic domain"/>
    <property type="match status" value="1"/>
</dbReference>
<dbReference type="SUPFAM" id="SSF53244">
    <property type="entry name" value="MurD-like peptide ligases, peptide-binding domain"/>
    <property type="match status" value="1"/>
</dbReference>
<keyword id="KW-0067">ATP-binding</keyword>
<keyword id="KW-0131">Cell cycle</keyword>
<keyword id="KW-0132">Cell division</keyword>
<keyword id="KW-0133">Cell shape</keyword>
<keyword id="KW-0961">Cell wall biogenesis/degradation</keyword>
<keyword id="KW-0963">Cytoplasm</keyword>
<keyword id="KW-0436">Ligase</keyword>
<keyword id="KW-0547">Nucleotide-binding</keyword>
<keyword id="KW-0573">Peptidoglycan synthesis</keyword>
<evidence type="ECO:0000255" key="1">
    <source>
        <dbReference type="HAMAP-Rule" id="MF_00639"/>
    </source>
</evidence>
<comment type="function">
    <text evidence="1">Cell wall formation. Catalyzes the addition of glutamate to the nucleotide precursor UDP-N-acetylmuramoyl-L-alanine (UMA).</text>
</comment>
<comment type="catalytic activity">
    <reaction evidence="1">
        <text>UDP-N-acetyl-alpha-D-muramoyl-L-alanine + D-glutamate + ATP = UDP-N-acetyl-alpha-D-muramoyl-L-alanyl-D-glutamate + ADP + phosphate + H(+)</text>
        <dbReference type="Rhea" id="RHEA:16429"/>
        <dbReference type="ChEBI" id="CHEBI:15378"/>
        <dbReference type="ChEBI" id="CHEBI:29986"/>
        <dbReference type="ChEBI" id="CHEBI:30616"/>
        <dbReference type="ChEBI" id="CHEBI:43474"/>
        <dbReference type="ChEBI" id="CHEBI:83898"/>
        <dbReference type="ChEBI" id="CHEBI:83900"/>
        <dbReference type="ChEBI" id="CHEBI:456216"/>
        <dbReference type="EC" id="6.3.2.9"/>
    </reaction>
</comment>
<comment type="pathway">
    <text evidence="1">Cell wall biogenesis; peptidoglycan biosynthesis.</text>
</comment>
<comment type="subcellular location">
    <subcellularLocation>
        <location evidence="1">Cytoplasm</location>
    </subcellularLocation>
</comment>
<comment type="similarity">
    <text evidence="1">Belongs to the MurCDEF family.</text>
</comment>